<comment type="function">
    <text evidence="1">Antimicrobial peptide.</text>
</comment>
<comment type="subcellular location">
    <subcellularLocation>
        <location evidence="2">Secreted</location>
    </subcellularLocation>
</comment>
<comment type="tissue specificity">
    <text evidence="5">Expressed by the skin glands.</text>
</comment>
<comment type="mass spectrometry"/>
<comment type="similarity">
    <text evidence="4">Belongs to the gastrin/cholecystokinin family. Magainin subfamily.</text>
</comment>
<evidence type="ECO:0000250" key="1">
    <source>
        <dbReference type="UniProtKB" id="C0HK87"/>
    </source>
</evidence>
<evidence type="ECO:0000269" key="2">
    <source>
    </source>
</evidence>
<evidence type="ECO:0000303" key="3">
    <source>
    </source>
</evidence>
<evidence type="ECO:0000305" key="4"/>
<evidence type="ECO:0000305" key="5">
    <source>
    </source>
</evidence>
<proteinExistence type="evidence at protein level"/>
<reference evidence="4" key="1">
    <citation type="journal article" date="2015" name="Peptides">
        <title>Host-defense and trefoil factor family peptides in skin secretions of the Mawa clawed frog Xenopus boumbaensis (Pipidae).</title>
        <authorList>
            <person name="Conlon J.M."/>
            <person name="Mechkarska M."/>
            <person name="Kolodziejek J."/>
            <person name="Leprince J."/>
            <person name="Coquet L."/>
            <person name="Jouenne T."/>
            <person name="Vaudry H."/>
            <person name="Nowotny N."/>
            <person name="King J.D."/>
        </authorList>
    </citation>
    <scope>PROTEIN SEQUENCE</scope>
    <scope>SUBCELLULAR LOCATION</scope>
    <scope>MASS SPECTROMETRY</scope>
    <scope>AMIDATION AT ALA-21</scope>
    <source>
        <tissue evidence="3">Skin secretion</tissue>
    </source>
</reference>
<name>PGBM2_XENBM</name>
<keyword id="KW-0027">Amidation</keyword>
<keyword id="KW-0878">Amphibian defense peptide</keyword>
<keyword id="KW-0929">Antimicrobial</keyword>
<keyword id="KW-0903">Direct protein sequencing</keyword>
<keyword id="KW-0964">Secreted</keyword>
<dbReference type="GO" id="GO:0005576">
    <property type="term" value="C:extracellular region"/>
    <property type="evidence" value="ECO:0007669"/>
    <property type="project" value="UniProtKB-SubCell"/>
</dbReference>
<dbReference type="GO" id="GO:0006952">
    <property type="term" value="P:defense response"/>
    <property type="evidence" value="ECO:0007669"/>
    <property type="project" value="UniProtKB-KW"/>
</dbReference>
<sequence>GMASKAGQVLGKLAKVAIGAA</sequence>
<organism evidence="3">
    <name type="scientific">Xenopus boumbaensis</name>
    <name type="common">Mawa clawed frog</name>
    <dbReference type="NCBI Taxonomy" id="288550"/>
    <lineage>
        <taxon>Eukaryota</taxon>
        <taxon>Metazoa</taxon>
        <taxon>Chordata</taxon>
        <taxon>Craniata</taxon>
        <taxon>Vertebrata</taxon>
        <taxon>Euteleostomi</taxon>
        <taxon>Amphibia</taxon>
        <taxon>Batrachia</taxon>
        <taxon>Anura</taxon>
        <taxon>Pipoidea</taxon>
        <taxon>Pipidae</taxon>
        <taxon>Xenopodinae</taxon>
        <taxon>Xenopus</taxon>
        <taxon>Xenopus</taxon>
    </lineage>
</organism>
<feature type="peptide" id="PRO_0000440795" description="Peptide PGLa-BM2" evidence="2">
    <location>
        <begin position="1"/>
        <end position="21"/>
    </location>
</feature>
<feature type="modified residue" description="Alanine amide" evidence="2">
    <location>
        <position position="21"/>
    </location>
</feature>
<accession>C0HKL8</accession>
<protein>
    <recommendedName>
        <fullName evidence="3">Peptide PGLa-BM2</fullName>
    </recommendedName>
</protein>